<feature type="chain" id="PRO_0000266494" description="Large ribosomal subunit protein uL14">
    <location>
        <begin position="1"/>
        <end position="123"/>
    </location>
</feature>
<dbReference type="EMBL" id="CP000436">
    <property type="protein sequence ID" value="ABI24351.1"/>
    <property type="molecule type" value="Genomic_DNA"/>
</dbReference>
<dbReference type="SMR" id="Q0I152"/>
<dbReference type="KEGG" id="hso:HS_0070"/>
<dbReference type="eggNOG" id="COG0093">
    <property type="taxonomic scope" value="Bacteria"/>
</dbReference>
<dbReference type="HOGENOM" id="CLU_095071_2_1_6"/>
<dbReference type="GO" id="GO:0022625">
    <property type="term" value="C:cytosolic large ribosomal subunit"/>
    <property type="evidence" value="ECO:0007669"/>
    <property type="project" value="TreeGrafter"/>
</dbReference>
<dbReference type="GO" id="GO:0070180">
    <property type="term" value="F:large ribosomal subunit rRNA binding"/>
    <property type="evidence" value="ECO:0007669"/>
    <property type="project" value="TreeGrafter"/>
</dbReference>
<dbReference type="GO" id="GO:0003735">
    <property type="term" value="F:structural constituent of ribosome"/>
    <property type="evidence" value="ECO:0007669"/>
    <property type="project" value="InterPro"/>
</dbReference>
<dbReference type="GO" id="GO:0006412">
    <property type="term" value="P:translation"/>
    <property type="evidence" value="ECO:0007669"/>
    <property type="project" value="UniProtKB-UniRule"/>
</dbReference>
<dbReference type="CDD" id="cd00337">
    <property type="entry name" value="Ribosomal_uL14"/>
    <property type="match status" value="1"/>
</dbReference>
<dbReference type="FunFam" id="2.40.150.20:FF:000001">
    <property type="entry name" value="50S ribosomal protein L14"/>
    <property type="match status" value="1"/>
</dbReference>
<dbReference type="Gene3D" id="2.40.150.20">
    <property type="entry name" value="Ribosomal protein L14"/>
    <property type="match status" value="1"/>
</dbReference>
<dbReference type="HAMAP" id="MF_01367">
    <property type="entry name" value="Ribosomal_uL14"/>
    <property type="match status" value="1"/>
</dbReference>
<dbReference type="InterPro" id="IPR000218">
    <property type="entry name" value="Ribosomal_uL14"/>
</dbReference>
<dbReference type="InterPro" id="IPR005745">
    <property type="entry name" value="Ribosomal_uL14_bac-type"/>
</dbReference>
<dbReference type="InterPro" id="IPR019972">
    <property type="entry name" value="Ribosomal_uL14_CS"/>
</dbReference>
<dbReference type="InterPro" id="IPR036853">
    <property type="entry name" value="Ribosomal_uL14_sf"/>
</dbReference>
<dbReference type="NCBIfam" id="TIGR01067">
    <property type="entry name" value="rplN_bact"/>
    <property type="match status" value="1"/>
</dbReference>
<dbReference type="PANTHER" id="PTHR11761">
    <property type="entry name" value="50S/60S RIBOSOMAL PROTEIN L14/L23"/>
    <property type="match status" value="1"/>
</dbReference>
<dbReference type="PANTHER" id="PTHR11761:SF3">
    <property type="entry name" value="LARGE RIBOSOMAL SUBUNIT PROTEIN UL14M"/>
    <property type="match status" value="1"/>
</dbReference>
<dbReference type="Pfam" id="PF00238">
    <property type="entry name" value="Ribosomal_L14"/>
    <property type="match status" value="1"/>
</dbReference>
<dbReference type="SMART" id="SM01374">
    <property type="entry name" value="Ribosomal_L14"/>
    <property type="match status" value="1"/>
</dbReference>
<dbReference type="SUPFAM" id="SSF50193">
    <property type="entry name" value="Ribosomal protein L14"/>
    <property type="match status" value="1"/>
</dbReference>
<dbReference type="PROSITE" id="PS00049">
    <property type="entry name" value="RIBOSOMAL_L14"/>
    <property type="match status" value="1"/>
</dbReference>
<organism>
    <name type="scientific">Histophilus somni (strain 129Pt)</name>
    <name type="common">Haemophilus somnus</name>
    <dbReference type="NCBI Taxonomy" id="205914"/>
    <lineage>
        <taxon>Bacteria</taxon>
        <taxon>Pseudomonadati</taxon>
        <taxon>Pseudomonadota</taxon>
        <taxon>Gammaproteobacteria</taxon>
        <taxon>Pasteurellales</taxon>
        <taxon>Pasteurellaceae</taxon>
        <taxon>Histophilus</taxon>
    </lineage>
</organism>
<protein>
    <recommendedName>
        <fullName evidence="1">Large ribosomal subunit protein uL14</fullName>
    </recommendedName>
    <alternativeName>
        <fullName evidence="2">50S ribosomal protein L14</fullName>
    </alternativeName>
</protein>
<proteinExistence type="inferred from homology"/>
<sequence>MIQEQTMLDVADNSGARSVMCIKVLGGSHRRYAAIGDIIKVTVKEAIPRGKVKKGDVLKAVVVRTKKGVRRPDGAVIRFDGNACVILNNNTEQPIGTRIFGPVTRELRSEKFMKIISLAPEVL</sequence>
<evidence type="ECO:0000255" key="1">
    <source>
        <dbReference type="HAMAP-Rule" id="MF_01367"/>
    </source>
</evidence>
<evidence type="ECO:0000305" key="2"/>
<comment type="function">
    <text evidence="1">Binds to 23S rRNA. Forms part of two intersubunit bridges in the 70S ribosome.</text>
</comment>
<comment type="subunit">
    <text evidence="1">Part of the 50S ribosomal subunit. Forms a cluster with proteins L3 and L19. In the 70S ribosome, L14 and L19 interact and together make contacts with the 16S rRNA in bridges B5 and B8.</text>
</comment>
<comment type="similarity">
    <text evidence="1">Belongs to the universal ribosomal protein uL14 family.</text>
</comment>
<keyword id="KW-0687">Ribonucleoprotein</keyword>
<keyword id="KW-0689">Ribosomal protein</keyword>
<keyword id="KW-0694">RNA-binding</keyword>
<keyword id="KW-0699">rRNA-binding</keyword>
<accession>Q0I152</accession>
<reference key="1">
    <citation type="journal article" date="2007" name="J. Bacteriol.">
        <title>Complete genome sequence of Haemophilus somnus (Histophilus somni) strain 129Pt and comparison to Haemophilus ducreyi 35000HP and Haemophilus influenzae Rd.</title>
        <authorList>
            <person name="Challacombe J.F."/>
            <person name="Duncan A.J."/>
            <person name="Brettin T.S."/>
            <person name="Bruce D."/>
            <person name="Chertkov O."/>
            <person name="Detter J.C."/>
            <person name="Han C.S."/>
            <person name="Misra M."/>
            <person name="Richardson P."/>
            <person name="Tapia R."/>
            <person name="Thayer N."/>
            <person name="Xie G."/>
            <person name="Inzana T.J."/>
        </authorList>
    </citation>
    <scope>NUCLEOTIDE SEQUENCE [LARGE SCALE GENOMIC DNA]</scope>
    <source>
        <strain>129Pt</strain>
    </source>
</reference>
<name>RL14_HISS1</name>
<gene>
    <name evidence="1" type="primary">rplN</name>
    <name type="ordered locus">HS_0070</name>
</gene>